<dbReference type="EC" id="6.1.1.9" evidence="1"/>
<dbReference type="EMBL" id="AE008923">
    <property type="protein sequence ID" value="AAM38402.1"/>
    <property type="molecule type" value="Genomic_DNA"/>
</dbReference>
<dbReference type="RefSeq" id="WP_011052357.1">
    <property type="nucleotide sequence ID" value="NC_003919.1"/>
</dbReference>
<dbReference type="SMR" id="Q8PGQ7"/>
<dbReference type="KEGG" id="xac:XAC3559"/>
<dbReference type="eggNOG" id="COG0525">
    <property type="taxonomic scope" value="Bacteria"/>
</dbReference>
<dbReference type="HOGENOM" id="CLU_001493_0_2_6"/>
<dbReference type="Proteomes" id="UP000000576">
    <property type="component" value="Chromosome"/>
</dbReference>
<dbReference type="GO" id="GO:0005829">
    <property type="term" value="C:cytosol"/>
    <property type="evidence" value="ECO:0007669"/>
    <property type="project" value="TreeGrafter"/>
</dbReference>
<dbReference type="GO" id="GO:0002161">
    <property type="term" value="F:aminoacyl-tRNA deacylase activity"/>
    <property type="evidence" value="ECO:0007669"/>
    <property type="project" value="InterPro"/>
</dbReference>
<dbReference type="GO" id="GO:0005524">
    <property type="term" value="F:ATP binding"/>
    <property type="evidence" value="ECO:0007669"/>
    <property type="project" value="UniProtKB-UniRule"/>
</dbReference>
<dbReference type="GO" id="GO:0004832">
    <property type="term" value="F:valine-tRNA ligase activity"/>
    <property type="evidence" value="ECO:0007669"/>
    <property type="project" value="UniProtKB-UniRule"/>
</dbReference>
<dbReference type="GO" id="GO:0006438">
    <property type="term" value="P:valyl-tRNA aminoacylation"/>
    <property type="evidence" value="ECO:0007669"/>
    <property type="project" value="UniProtKB-UniRule"/>
</dbReference>
<dbReference type="CDD" id="cd07962">
    <property type="entry name" value="Anticodon_Ia_Val"/>
    <property type="match status" value="1"/>
</dbReference>
<dbReference type="CDD" id="cd00817">
    <property type="entry name" value="ValRS_core"/>
    <property type="match status" value="1"/>
</dbReference>
<dbReference type="FunFam" id="1.10.287.380:FF:000001">
    <property type="entry name" value="Valine--tRNA ligase"/>
    <property type="match status" value="1"/>
</dbReference>
<dbReference type="FunFam" id="3.40.50.620:FF:000032">
    <property type="entry name" value="Valine--tRNA ligase"/>
    <property type="match status" value="1"/>
</dbReference>
<dbReference type="FunFam" id="3.40.50.620:FF:000098">
    <property type="entry name" value="Valine--tRNA ligase"/>
    <property type="match status" value="1"/>
</dbReference>
<dbReference type="FunFam" id="3.90.740.10:FF:000015">
    <property type="entry name" value="Valine--tRNA ligase"/>
    <property type="match status" value="1"/>
</dbReference>
<dbReference type="Gene3D" id="3.40.50.620">
    <property type="entry name" value="HUPs"/>
    <property type="match status" value="2"/>
</dbReference>
<dbReference type="Gene3D" id="1.10.730.10">
    <property type="entry name" value="Isoleucyl-tRNA Synthetase, Domain 1"/>
    <property type="match status" value="1"/>
</dbReference>
<dbReference type="Gene3D" id="1.10.287.380">
    <property type="entry name" value="Valyl-tRNA synthetase, C-terminal domain"/>
    <property type="match status" value="1"/>
</dbReference>
<dbReference type="Gene3D" id="3.90.740.10">
    <property type="entry name" value="Valyl/Leucyl/Isoleucyl-tRNA synthetase, editing domain"/>
    <property type="match status" value="2"/>
</dbReference>
<dbReference type="HAMAP" id="MF_02004">
    <property type="entry name" value="Val_tRNA_synth_type1"/>
    <property type="match status" value="1"/>
</dbReference>
<dbReference type="InterPro" id="IPR001412">
    <property type="entry name" value="aa-tRNA-synth_I_CS"/>
</dbReference>
<dbReference type="InterPro" id="IPR002300">
    <property type="entry name" value="aa-tRNA-synth_Ia"/>
</dbReference>
<dbReference type="InterPro" id="IPR033705">
    <property type="entry name" value="Anticodon_Ia_Val"/>
</dbReference>
<dbReference type="InterPro" id="IPR013155">
    <property type="entry name" value="M/V/L/I-tRNA-synth_anticd-bd"/>
</dbReference>
<dbReference type="InterPro" id="IPR014729">
    <property type="entry name" value="Rossmann-like_a/b/a_fold"/>
</dbReference>
<dbReference type="InterPro" id="IPR010978">
    <property type="entry name" value="tRNA-bd_arm"/>
</dbReference>
<dbReference type="InterPro" id="IPR009080">
    <property type="entry name" value="tRNAsynth_Ia_anticodon-bd"/>
</dbReference>
<dbReference type="InterPro" id="IPR037118">
    <property type="entry name" value="Val-tRNA_synth_C_sf"/>
</dbReference>
<dbReference type="InterPro" id="IPR019499">
    <property type="entry name" value="Val-tRNA_synth_tRNA-bd"/>
</dbReference>
<dbReference type="InterPro" id="IPR009008">
    <property type="entry name" value="Val/Leu/Ile-tRNA-synth_edit"/>
</dbReference>
<dbReference type="InterPro" id="IPR002303">
    <property type="entry name" value="Valyl-tRNA_ligase"/>
</dbReference>
<dbReference type="NCBIfam" id="NF004349">
    <property type="entry name" value="PRK05729.1"/>
    <property type="match status" value="1"/>
</dbReference>
<dbReference type="NCBIfam" id="TIGR00422">
    <property type="entry name" value="valS"/>
    <property type="match status" value="1"/>
</dbReference>
<dbReference type="PANTHER" id="PTHR11946:SF93">
    <property type="entry name" value="VALINE--TRNA LIGASE, CHLOROPLASTIC_MITOCHONDRIAL 2"/>
    <property type="match status" value="1"/>
</dbReference>
<dbReference type="PANTHER" id="PTHR11946">
    <property type="entry name" value="VALYL-TRNA SYNTHETASES"/>
    <property type="match status" value="1"/>
</dbReference>
<dbReference type="Pfam" id="PF08264">
    <property type="entry name" value="Anticodon_1"/>
    <property type="match status" value="1"/>
</dbReference>
<dbReference type="Pfam" id="PF00133">
    <property type="entry name" value="tRNA-synt_1"/>
    <property type="match status" value="1"/>
</dbReference>
<dbReference type="Pfam" id="PF10458">
    <property type="entry name" value="Val_tRNA-synt_C"/>
    <property type="match status" value="1"/>
</dbReference>
<dbReference type="PRINTS" id="PR00986">
    <property type="entry name" value="TRNASYNTHVAL"/>
</dbReference>
<dbReference type="SUPFAM" id="SSF47323">
    <property type="entry name" value="Anticodon-binding domain of a subclass of class I aminoacyl-tRNA synthetases"/>
    <property type="match status" value="1"/>
</dbReference>
<dbReference type="SUPFAM" id="SSF52374">
    <property type="entry name" value="Nucleotidylyl transferase"/>
    <property type="match status" value="1"/>
</dbReference>
<dbReference type="SUPFAM" id="SSF46589">
    <property type="entry name" value="tRNA-binding arm"/>
    <property type="match status" value="1"/>
</dbReference>
<dbReference type="SUPFAM" id="SSF50677">
    <property type="entry name" value="ValRS/IleRS/LeuRS editing domain"/>
    <property type="match status" value="1"/>
</dbReference>
<dbReference type="PROSITE" id="PS00178">
    <property type="entry name" value="AA_TRNA_LIGASE_I"/>
    <property type="match status" value="1"/>
</dbReference>
<accession>Q8PGQ7</accession>
<evidence type="ECO:0000255" key="1">
    <source>
        <dbReference type="HAMAP-Rule" id="MF_02004"/>
    </source>
</evidence>
<keyword id="KW-0030">Aminoacyl-tRNA synthetase</keyword>
<keyword id="KW-0067">ATP-binding</keyword>
<keyword id="KW-0175">Coiled coil</keyword>
<keyword id="KW-0963">Cytoplasm</keyword>
<keyword id="KW-0436">Ligase</keyword>
<keyword id="KW-0547">Nucleotide-binding</keyword>
<keyword id="KW-0648">Protein biosynthesis</keyword>
<protein>
    <recommendedName>
        <fullName evidence="1">Valine--tRNA ligase</fullName>
        <ecNumber evidence="1">6.1.1.9</ecNumber>
    </recommendedName>
    <alternativeName>
        <fullName evidence="1">Valyl-tRNA synthetase</fullName>
        <shortName evidence="1">ValRS</shortName>
    </alternativeName>
</protein>
<reference key="1">
    <citation type="journal article" date="2002" name="Nature">
        <title>Comparison of the genomes of two Xanthomonas pathogens with differing host specificities.</title>
        <authorList>
            <person name="da Silva A.C.R."/>
            <person name="Ferro J.A."/>
            <person name="Reinach F.C."/>
            <person name="Farah C.S."/>
            <person name="Furlan L.R."/>
            <person name="Quaggio R.B."/>
            <person name="Monteiro-Vitorello C.B."/>
            <person name="Van Sluys M.A."/>
            <person name="Almeida N.F. Jr."/>
            <person name="Alves L.M.C."/>
            <person name="do Amaral A.M."/>
            <person name="Bertolini M.C."/>
            <person name="Camargo L.E.A."/>
            <person name="Camarotte G."/>
            <person name="Cannavan F."/>
            <person name="Cardozo J."/>
            <person name="Chambergo F."/>
            <person name="Ciapina L.P."/>
            <person name="Cicarelli R.M.B."/>
            <person name="Coutinho L.L."/>
            <person name="Cursino-Santos J.R."/>
            <person name="El-Dorry H."/>
            <person name="Faria J.B."/>
            <person name="Ferreira A.J.S."/>
            <person name="Ferreira R.C.C."/>
            <person name="Ferro M.I.T."/>
            <person name="Formighieri E.F."/>
            <person name="Franco M.C."/>
            <person name="Greggio C.C."/>
            <person name="Gruber A."/>
            <person name="Katsuyama A.M."/>
            <person name="Kishi L.T."/>
            <person name="Leite R.P."/>
            <person name="Lemos E.G.M."/>
            <person name="Lemos M.V.F."/>
            <person name="Locali E.C."/>
            <person name="Machado M.A."/>
            <person name="Madeira A.M.B.N."/>
            <person name="Martinez-Rossi N.M."/>
            <person name="Martins E.C."/>
            <person name="Meidanis J."/>
            <person name="Menck C.F.M."/>
            <person name="Miyaki C.Y."/>
            <person name="Moon D.H."/>
            <person name="Moreira L.M."/>
            <person name="Novo M.T.M."/>
            <person name="Okura V.K."/>
            <person name="Oliveira M.C."/>
            <person name="Oliveira V.R."/>
            <person name="Pereira H.A."/>
            <person name="Rossi A."/>
            <person name="Sena J.A.D."/>
            <person name="Silva C."/>
            <person name="de Souza R.F."/>
            <person name="Spinola L.A.F."/>
            <person name="Takita M.A."/>
            <person name="Tamura R.E."/>
            <person name="Teixeira E.C."/>
            <person name="Tezza R.I.D."/>
            <person name="Trindade dos Santos M."/>
            <person name="Truffi D."/>
            <person name="Tsai S.M."/>
            <person name="White F.F."/>
            <person name="Setubal J.C."/>
            <person name="Kitajima J.P."/>
        </authorList>
    </citation>
    <scope>NUCLEOTIDE SEQUENCE [LARGE SCALE GENOMIC DNA]</scope>
    <source>
        <strain>306</strain>
    </source>
</reference>
<feature type="chain" id="PRO_0000224598" description="Valine--tRNA ligase">
    <location>
        <begin position="1"/>
        <end position="944"/>
    </location>
</feature>
<feature type="coiled-coil region" evidence="1">
    <location>
        <begin position="878"/>
        <end position="942"/>
    </location>
</feature>
<feature type="short sequence motif" description="'HIGH' region">
    <location>
        <begin position="43"/>
        <end position="53"/>
    </location>
</feature>
<feature type="short sequence motif" description="'KMSKS' region">
    <location>
        <begin position="550"/>
        <end position="554"/>
    </location>
</feature>
<feature type="binding site" evidence="1">
    <location>
        <position position="553"/>
    </location>
    <ligand>
        <name>ATP</name>
        <dbReference type="ChEBI" id="CHEBI:30616"/>
    </ligand>
</feature>
<comment type="function">
    <text evidence="1">Catalyzes the attachment of valine to tRNA(Val). As ValRS can inadvertently accommodate and process structurally similar amino acids such as threonine, to avoid such errors, it has a 'posttransfer' editing activity that hydrolyzes mischarged Thr-tRNA(Val) in a tRNA-dependent manner.</text>
</comment>
<comment type="catalytic activity">
    <reaction evidence="1">
        <text>tRNA(Val) + L-valine + ATP = L-valyl-tRNA(Val) + AMP + diphosphate</text>
        <dbReference type="Rhea" id="RHEA:10704"/>
        <dbReference type="Rhea" id="RHEA-COMP:9672"/>
        <dbReference type="Rhea" id="RHEA-COMP:9708"/>
        <dbReference type="ChEBI" id="CHEBI:30616"/>
        <dbReference type="ChEBI" id="CHEBI:33019"/>
        <dbReference type="ChEBI" id="CHEBI:57762"/>
        <dbReference type="ChEBI" id="CHEBI:78442"/>
        <dbReference type="ChEBI" id="CHEBI:78537"/>
        <dbReference type="ChEBI" id="CHEBI:456215"/>
        <dbReference type="EC" id="6.1.1.9"/>
    </reaction>
</comment>
<comment type="subunit">
    <text evidence="1">Monomer.</text>
</comment>
<comment type="subcellular location">
    <subcellularLocation>
        <location evidence="1">Cytoplasm</location>
    </subcellularLocation>
</comment>
<comment type="domain">
    <text evidence="1">ValRS has two distinct active sites: one for aminoacylation and one for editing. The misactivated threonine is translocated from the active site to the editing site.</text>
</comment>
<comment type="domain">
    <text evidence="1">The C-terminal coiled-coil domain is crucial for aminoacylation activity.</text>
</comment>
<comment type="similarity">
    <text evidence="1">Belongs to the class-I aminoacyl-tRNA synthetase family. ValS type 1 subfamily.</text>
</comment>
<sequence length="944" mass="106434">MTTLASSYDPSSFESRLYAQWEAAGYFVPSGKGEPYTVLLPPPNVTGTLHMGHAFQQTLMDALVRYHRMRGYDTLWQVGTDHAGIATEMVVSRNLALEGKGQTRDSLGREGFIAKVWEWKAESGDTIERQMRRLGTSSDWSRSTFTMDPQPSAAVNEAFVRWYEQGLIYRGQRLVNWDPVLKTAISDLEVENVEEDGFLWSIRYPLADDVSYEHVEHDADGNETLRETRDYLVVATTRPETMLGDTAVMLHPEDARYLTLHNARIVLPLTGRHVPVITDDYVDRAFGTGVVKVTPAHDFNDYQVGVRHDLPLINLFTVTATINENAPERYRGLDRYDARKLVLSELEDLGVLVETKPHKLQVPRGDRTGQVIEPYLTDQWFVKMDALAKRGLELVESGQIKFVPPNWINTYRHWMENIQDWCISRQLWWGHRIPAWFDDAGKCYVGHDEAEVRAKHGLGAEIALHQDSDVLETWFSSQLWPFSTLGWPDAQAMAERGFGRYLPSSVLVTGFDIIFFWVARMIMATDSFTGQVPFRDVYITGLIRDAQGQKMSKSKGNVLDPLDIIDGISIEDLVAKRTSGLMKPKDAPKIEKATRKEFPDGIIAHGADALRFTIAALATHGRDIKFDLGRAEGYKNFCNKLWNATRFVLMNSEGARFTGVPQPRTEAEKWILARLDKVTAETHAHYANYRFDLLAQSLYEFAWNAFCDWFVELAKPALNHQDADAAASTRHTLLFVLESLLRLLHPLTPFVTEELWQQVAPRLGITTATISLQSFPQPGDVDTGSYASAEADVEWLKSMVSALRRVRSELNVPPSKQVRLLLQAGTADDRPRVARFASQLSFLLKLESIDWLDAGQDTPPSAAAIVGELTLLVPLEGLVDMDAERTRLDKEIRRVEGEIGKCNGKLGSATFVQNAPAAVVEQERARLNDWTTQLTGLREQRAKI</sequence>
<organism>
    <name type="scientific">Xanthomonas axonopodis pv. citri (strain 306)</name>
    <dbReference type="NCBI Taxonomy" id="190486"/>
    <lineage>
        <taxon>Bacteria</taxon>
        <taxon>Pseudomonadati</taxon>
        <taxon>Pseudomonadota</taxon>
        <taxon>Gammaproteobacteria</taxon>
        <taxon>Lysobacterales</taxon>
        <taxon>Lysobacteraceae</taxon>
        <taxon>Xanthomonas</taxon>
    </lineage>
</organism>
<proteinExistence type="inferred from homology"/>
<name>SYV_XANAC</name>
<gene>
    <name evidence="1" type="primary">valS</name>
    <name type="ordered locus">XAC3559</name>
</gene>